<reference key="1">
    <citation type="journal article" date="2007" name="Genes Dev.">
        <title>New insights into Acinetobacter baumannii pathogenesis revealed by high-density pyrosequencing and transposon mutagenesis.</title>
        <authorList>
            <person name="Smith M.G."/>
            <person name="Gianoulis T.A."/>
            <person name="Pukatzki S."/>
            <person name="Mekalanos J.J."/>
            <person name="Ornston L.N."/>
            <person name="Gerstein M."/>
            <person name="Snyder M."/>
        </authorList>
    </citation>
    <scope>NUCLEOTIDE SEQUENCE [LARGE SCALE GENOMIC DNA]</scope>
    <source>
        <strain>ATCC 17978 / DSM 105126 / CIP 53.77 / LMG 1025 / NCDC KC755 / 5377</strain>
    </source>
</reference>
<protein>
    <recommendedName>
        <fullName>Outer membrane protein Omp38</fullName>
    </recommendedName>
</protein>
<proteinExistence type="inferred from homology"/>
<dbReference type="EMBL" id="CP000521">
    <property type="protein sequence ID" value="ABO13246.2"/>
    <property type="molecule type" value="Genomic_DNA"/>
</dbReference>
<dbReference type="RefSeq" id="WP_000777879.1">
    <property type="nucleotide sequence ID" value="NZ_CACVBA010000001.1"/>
</dbReference>
<dbReference type="SMR" id="A3M8K2"/>
<dbReference type="KEGG" id="acb:A1S_2840"/>
<dbReference type="HOGENOM" id="CLU_031536_1_0_6"/>
<dbReference type="GO" id="GO:0009279">
    <property type="term" value="C:cell outer membrane"/>
    <property type="evidence" value="ECO:0007669"/>
    <property type="project" value="UniProtKB-SubCell"/>
</dbReference>
<dbReference type="GO" id="GO:0046930">
    <property type="term" value="C:pore complex"/>
    <property type="evidence" value="ECO:0007669"/>
    <property type="project" value="UniProtKB-KW"/>
</dbReference>
<dbReference type="GO" id="GO:0015288">
    <property type="term" value="F:porin activity"/>
    <property type="evidence" value="ECO:0007669"/>
    <property type="project" value="UniProtKB-KW"/>
</dbReference>
<dbReference type="GO" id="GO:0006811">
    <property type="term" value="P:monoatomic ion transport"/>
    <property type="evidence" value="ECO:0007669"/>
    <property type="project" value="UniProtKB-KW"/>
</dbReference>
<dbReference type="CDD" id="cd07185">
    <property type="entry name" value="OmpA_C-like"/>
    <property type="match status" value="1"/>
</dbReference>
<dbReference type="Gene3D" id="2.40.160.20">
    <property type="match status" value="1"/>
</dbReference>
<dbReference type="Gene3D" id="3.30.1330.60">
    <property type="entry name" value="OmpA-like domain"/>
    <property type="match status" value="1"/>
</dbReference>
<dbReference type="InterPro" id="IPR050330">
    <property type="entry name" value="Bact_OuterMem_StrucFunc"/>
</dbReference>
<dbReference type="InterPro" id="IPR011250">
    <property type="entry name" value="OMP/PagP_b-brl"/>
</dbReference>
<dbReference type="InterPro" id="IPR054882">
    <property type="entry name" value="Omp38"/>
</dbReference>
<dbReference type="InterPro" id="IPR027385">
    <property type="entry name" value="OMP_b-brl"/>
</dbReference>
<dbReference type="InterPro" id="IPR006664">
    <property type="entry name" value="OMP_bac"/>
</dbReference>
<dbReference type="InterPro" id="IPR006665">
    <property type="entry name" value="OmpA-like"/>
</dbReference>
<dbReference type="InterPro" id="IPR036737">
    <property type="entry name" value="OmpA-like_sf"/>
</dbReference>
<dbReference type="NCBIfam" id="NF045788">
    <property type="entry name" value="Omp38Acinit"/>
    <property type="match status" value="1"/>
</dbReference>
<dbReference type="PANTHER" id="PTHR30329:SF21">
    <property type="entry name" value="LIPOPROTEIN YIAD-RELATED"/>
    <property type="match status" value="1"/>
</dbReference>
<dbReference type="PANTHER" id="PTHR30329">
    <property type="entry name" value="STATOR ELEMENT OF FLAGELLAR MOTOR COMPLEX"/>
    <property type="match status" value="1"/>
</dbReference>
<dbReference type="Pfam" id="PF13505">
    <property type="entry name" value="OMP_b-brl"/>
    <property type="match status" value="1"/>
</dbReference>
<dbReference type="Pfam" id="PF00691">
    <property type="entry name" value="OmpA"/>
    <property type="match status" value="1"/>
</dbReference>
<dbReference type="PRINTS" id="PR01021">
    <property type="entry name" value="OMPADOMAIN"/>
</dbReference>
<dbReference type="SUPFAM" id="SSF56925">
    <property type="entry name" value="OMPA-like"/>
    <property type="match status" value="1"/>
</dbReference>
<dbReference type="SUPFAM" id="SSF103088">
    <property type="entry name" value="OmpA-like"/>
    <property type="match status" value="1"/>
</dbReference>
<dbReference type="PROSITE" id="PS51123">
    <property type="entry name" value="OMPA_2"/>
    <property type="match status" value="1"/>
</dbReference>
<evidence type="ECO:0000250" key="1">
    <source>
        <dbReference type="UniProtKB" id="Q6RYW5"/>
    </source>
</evidence>
<evidence type="ECO:0000255" key="2"/>
<evidence type="ECO:0000255" key="3">
    <source>
        <dbReference type="PROSITE-ProRule" id="PRU00473"/>
    </source>
</evidence>
<evidence type="ECO:0000305" key="4"/>
<keyword id="KW-0053">Apoptosis</keyword>
<keyword id="KW-0998">Cell outer membrane</keyword>
<keyword id="KW-0406">Ion transport</keyword>
<keyword id="KW-0472">Membrane</keyword>
<keyword id="KW-0626">Porin</keyword>
<keyword id="KW-0732">Signal</keyword>
<keyword id="KW-0812">Transmembrane</keyword>
<keyword id="KW-1134">Transmembrane beta strand</keyword>
<keyword id="KW-0813">Transport</keyword>
<feature type="signal peptide" evidence="2">
    <location>
        <begin position="1"/>
        <end position="19"/>
    </location>
</feature>
<feature type="chain" id="PRO_0000290209" description="Outer membrane protein Omp38">
    <location>
        <begin position="20"/>
        <end position="356"/>
    </location>
</feature>
<feature type="domain" description="OmpA-like" evidence="3">
    <location>
        <begin position="221"/>
        <end position="339"/>
    </location>
</feature>
<comment type="function">
    <text evidence="1">Porin. Induces apoptosis in human cells through caspases-dependent and AIF-dependent pathways. Purified Omp38 enters the cells and localizes to the mitochondria, which leads to a release of proapoptotic molecules such as cytochrome c and AIF (apoptosis-inducing factor).</text>
</comment>
<comment type="subunit">
    <text evidence="1">Homotrimer.</text>
</comment>
<comment type="subcellular location">
    <subcellularLocation>
        <location evidence="1">Cell outer membrane</location>
        <topology evidence="4">Multi-pass membrane protein</topology>
    </subcellularLocation>
</comment>
<comment type="similarity">
    <text evidence="4">Belongs to the outer membrane OOP (TC 1.B.6) superfamily.</text>
</comment>
<gene>
    <name type="primary">omp38</name>
    <name type="ordered locus">A1S_2840</name>
</gene>
<accession>A3M8K2</accession>
<organism>
    <name type="scientific">Acinetobacter baumannii (strain ATCC 17978 / DSM 105126 / CIP 53.77 / LMG 1025 / NCDC KC755 / 5377)</name>
    <dbReference type="NCBI Taxonomy" id="400667"/>
    <lineage>
        <taxon>Bacteria</taxon>
        <taxon>Pseudomonadati</taxon>
        <taxon>Pseudomonadota</taxon>
        <taxon>Gammaproteobacteria</taxon>
        <taxon>Moraxellales</taxon>
        <taxon>Moraxellaceae</taxon>
        <taxon>Acinetobacter</taxon>
        <taxon>Acinetobacter calcoaceticus/baumannii complex</taxon>
    </lineage>
</organism>
<sequence>MKLSRIALATMLVAAPLAAANAGVTVTPLLLGYTFQDSQHNNGGKDGNLTNGPELQDDLFVGAALGIELTPWLGFEAEYNQVKGDVDGASAGAEYKQKQINGNFYVTSDLITKNYDSKIKPYVLLGAGHYKYDFDGVNRGTRGTSEEGTLGNAGVGAFWRLNDALSLRTEARATYNADEEFWNYTALAGLNVVLGGHLKPAAPVVEVAPVEPTPVTPQPQELTEDLNMELRVFFDTNKSNIKDQYKPEIAKVAEKLSEYPNATARIEGHTDNTGPRKLNERLSLARANSVKSALVNEYNVDASRLSTQGFAWDQPIADNKTKEGRAMNRRVFATITGSRTVVVQPGQEAAAPAAAQ</sequence>
<name>OMP38_ACIBT</name>